<gene>
    <name type="ordered locus">KPK_4355</name>
</gene>
<name>Y4355_KLEP3</name>
<protein>
    <recommendedName>
        <fullName evidence="1">UPF0178 protein KPK_4355</fullName>
    </recommendedName>
</protein>
<evidence type="ECO:0000255" key="1">
    <source>
        <dbReference type="HAMAP-Rule" id="MF_00489"/>
    </source>
</evidence>
<organism>
    <name type="scientific">Klebsiella pneumoniae (strain 342)</name>
    <dbReference type="NCBI Taxonomy" id="507522"/>
    <lineage>
        <taxon>Bacteria</taxon>
        <taxon>Pseudomonadati</taxon>
        <taxon>Pseudomonadota</taxon>
        <taxon>Gammaproteobacteria</taxon>
        <taxon>Enterobacterales</taxon>
        <taxon>Enterobacteriaceae</taxon>
        <taxon>Klebsiella/Raoultella group</taxon>
        <taxon>Klebsiella</taxon>
        <taxon>Klebsiella pneumoniae complex</taxon>
    </lineage>
</organism>
<accession>B5Y115</accession>
<feature type="chain" id="PRO_1000126198" description="UPF0178 protein KPK_4355">
    <location>
        <begin position="1"/>
        <end position="152"/>
    </location>
</feature>
<dbReference type="EMBL" id="CP000964">
    <property type="protein sequence ID" value="ACI08471.1"/>
    <property type="molecule type" value="Genomic_DNA"/>
</dbReference>
<dbReference type="KEGG" id="kpe:KPK_4355"/>
<dbReference type="HOGENOM" id="CLU_106619_1_0_6"/>
<dbReference type="BioCyc" id="KPNE507522:GI0B-4337-MONOMER"/>
<dbReference type="Proteomes" id="UP000001734">
    <property type="component" value="Chromosome"/>
</dbReference>
<dbReference type="CDD" id="cd18720">
    <property type="entry name" value="PIN_YqxD-like"/>
    <property type="match status" value="1"/>
</dbReference>
<dbReference type="HAMAP" id="MF_00489">
    <property type="entry name" value="UPF0178"/>
    <property type="match status" value="1"/>
</dbReference>
<dbReference type="InterPro" id="IPR003791">
    <property type="entry name" value="UPF0178"/>
</dbReference>
<dbReference type="NCBIfam" id="NF001095">
    <property type="entry name" value="PRK00124.1"/>
    <property type="match status" value="1"/>
</dbReference>
<dbReference type="PANTHER" id="PTHR35146">
    <property type="entry name" value="UPF0178 PROTEIN YAII"/>
    <property type="match status" value="1"/>
</dbReference>
<dbReference type="PANTHER" id="PTHR35146:SF1">
    <property type="entry name" value="UPF0178 PROTEIN YAII"/>
    <property type="match status" value="1"/>
</dbReference>
<dbReference type="Pfam" id="PF02639">
    <property type="entry name" value="DUF188"/>
    <property type="match status" value="1"/>
</dbReference>
<proteinExistence type="inferred from homology"/>
<sequence>MAIWVDADACPNVIKEILFRAAERTQIPVTLVANQPLRVPPSRFIRTLRVEQGFDVADNEIVRQCAAGDLVITADIPLAAEVLAKGGAALNPRGERYSEATIRERLTMRDFMETLRASGVQTGGPDSLSQRDRQQFAAELEKWLLAVKRQQG</sequence>
<reference key="1">
    <citation type="journal article" date="2008" name="PLoS Genet.">
        <title>Complete genome sequence of the N2-fixing broad host range endophyte Klebsiella pneumoniae 342 and virulence predictions verified in mice.</title>
        <authorList>
            <person name="Fouts D.E."/>
            <person name="Tyler H.L."/>
            <person name="DeBoy R.T."/>
            <person name="Daugherty S."/>
            <person name="Ren Q."/>
            <person name="Badger J.H."/>
            <person name="Durkin A.S."/>
            <person name="Huot H."/>
            <person name="Shrivastava S."/>
            <person name="Kothari S."/>
            <person name="Dodson R.J."/>
            <person name="Mohamoud Y."/>
            <person name="Khouri H."/>
            <person name="Roesch L.F.W."/>
            <person name="Krogfelt K.A."/>
            <person name="Struve C."/>
            <person name="Triplett E.W."/>
            <person name="Methe B.A."/>
        </authorList>
    </citation>
    <scope>NUCLEOTIDE SEQUENCE [LARGE SCALE GENOMIC DNA]</scope>
    <source>
        <strain>342</strain>
    </source>
</reference>
<comment type="similarity">
    <text evidence="1">Belongs to the UPF0178 family.</text>
</comment>